<evidence type="ECO:0000250" key="1"/>
<evidence type="ECO:0000250" key="2">
    <source>
        <dbReference type="UniProtKB" id="Q4KUS2"/>
    </source>
</evidence>
<evidence type="ECO:0000250" key="3">
    <source>
        <dbReference type="UniProtKB" id="Q62768"/>
    </source>
</evidence>
<evidence type="ECO:0000255" key="4"/>
<evidence type="ECO:0000255" key="5">
    <source>
        <dbReference type="PROSITE-ProRule" id="PRU00041"/>
    </source>
</evidence>
<evidence type="ECO:0000255" key="6">
    <source>
        <dbReference type="PROSITE-ProRule" id="PRU00226"/>
    </source>
</evidence>
<evidence type="ECO:0000255" key="7">
    <source>
        <dbReference type="PROSITE-ProRule" id="PRU00587"/>
    </source>
</evidence>
<evidence type="ECO:0000255" key="8">
    <source>
        <dbReference type="PROSITE-ProRule" id="PRU00588"/>
    </source>
</evidence>
<evidence type="ECO:0000256" key="9">
    <source>
        <dbReference type="SAM" id="MobiDB-lite"/>
    </source>
</evidence>
<evidence type="ECO:0000269" key="10">
    <source>
    </source>
</evidence>
<evidence type="ECO:0000269" key="11">
    <source>
    </source>
</evidence>
<evidence type="ECO:0000305" key="12"/>
<evidence type="ECO:0000312" key="13">
    <source>
        <dbReference type="HGNC" id="HGNC:23150"/>
    </source>
</evidence>
<keyword id="KW-0106">Calcium</keyword>
<keyword id="KW-1003">Cell membrane</keyword>
<keyword id="KW-0966">Cell projection</keyword>
<keyword id="KW-0175">Coiled coil</keyword>
<keyword id="KW-0963">Cytoplasm</keyword>
<keyword id="KW-0221">Differentiation</keyword>
<keyword id="KW-0268">Exocytosis</keyword>
<keyword id="KW-0472">Membrane</keyword>
<keyword id="KW-0479">Metal-binding</keyword>
<keyword id="KW-0597">Phosphoprotein</keyword>
<keyword id="KW-1267">Proteomics identification</keyword>
<keyword id="KW-1185">Reference proteome</keyword>
<keyword id="KW-0677">Repeat</keyword>
<keyword id="KW-0770">Synapse</keyword>
<keyword id="KW-0862">Zinc</keyword>
<keyword id="KW-0863">Zinc-finger</keyword>
<protein>
    <recommendedName>
        <fullName evidence="12">Protein unc-13 homolog A</fullName>
    </recommendedName>
    <alternativeName>
        <fullName>Munc13-1</fullName>
    </alternativeName>
</protein>
<proteinExistence type="evidence at protein level"/>
<comment type="function">
    <text evidence="2 3 11">Plays a role in vesicle maturation during exocytosis as a target of the diacylglycerol second messenger pathway. Involved in neurotransmitter release by acting in synaptic vesicle priming prior to vesicle fusion and participates in the activity-dependent refilling of readily releasable vesicle pool (RRP). Essential for synaptic vesicle maturation in most excitatory/glutamatergic but not inhibitory/GABA-mediated synapses. Facilitates neuronal dense core vesicles fusion as well as controls the location and efficiency of their synaptic release (By similarity). Also involved in secretory granule priming in insulin secretion. Plays a role in dendrite formation by melanocytes (PubMed:23999003).</text>
</comment>
<comment type="cofactor">
    <cofactor evidence="5">
        <name>Ca(2+)</name>
        <dbReference type="ChEBI" id="CHEBI:29108"/>
    </cofactor>
</comment>
<comment type="subunit">
    <text evidence="2 3">Interacts with the N-termini of STX1A and/or STX1B1 and DOC2A. Interacts with BSN. Interacts with RIMS1 which recruits UNC13A to the active zone. Forms homodimers via its first C2 domain. Also interacts via this domain with the zinc finger domain of RIMS2. Part of a complex consisting of ERC2, RIMS1 and UNC13A. Also part of a complex consisting of UNC13A, RIMS2 and RAB3A (By similarity). Interacts with FBXO45 (via SRY domain); leading to the degradation of UNC13A by the proteasome (By similarity).</text>
</comment>
<comment type="subcellular location">
    <subcellularLocation>
        <location evidence="3">Cytoplasm</location>
    </subcellularLocation>
    <subcellularLocation>
        <location evidence="3">Cell membrane</location>
        <topology evidence="3">Peripheral membrane protein</topology>
    </subcellularLocation>
    <subcellularLocation>
        <location evidence="3">Presynaptic cell membrane</location>
        <topology evidence="3">Peripheral membrane protein</topology>
    </subcellularLocation>
    <subcellularLocation>
        <location evidence="3">Presynaptic active zone</location>
    </subcellularLocation>
    <text evidence="3">Translocated to the plasma membrane in response to phorbol ester binding.</text>
</comment>
<comment type="tissue specificity">
    <text evidence="10 11">Expressed in pancreatic islet cells (PubMed:12871971). Expressed in melanocytes (PubMed:23999003).</text>
</comment>
<comment type="domain">
    <text evidence="1">The C2 domains are not involved in calcium-dependent phospholipid binding.</text>
</comment>
<comment type="domain">
    <text evidence="1">The C-terminal region containing both MHD domains and the third C2 domain is required for synaptic vesicle priming activity.</text>
</comment>
<comment type="similarity">
    <text evidence="12">Belongs to the unc-13 family.</text>
</comment>
<gene>
    <name evidence="13" type="primary">UNC13A</name>
    <name type="synonym">KIAA1032</name>
</gene>
<dbReference type="EMBL" id="AC008761">
    <property type="status" value="NOT_ANNOTATED_CDS"/>
    <property type="molecule type" value="Genomic_DNA"/>
</dbReference>
<dbReference type="EMBL" id="AB028955">
    <property type="protein sequence ID" value="BAA82984.2"/>
    <property type="molecule type" value="mRNA"/>
</dbReference>
<dbReference type="CCDS" id="CCDS46013.2"/>
<dbReference type="RefSeq" id="NP_001073890.2">
    <property type="nucleotide sequence ID" value="NM_001080421.3"/>
</dbReference>
<dbReference type="BMRB" id="Q9UPW8"/>
<dbReference type="SMR" id="Q9UPW8"/>
<dbReference type="BioGRID" id="116665">
    <property type="interactions" value="12"/>
</dbReference>
<dbReference type="FunCoup" id="Q9UPW8">
    <property type="interactions" value="285"/>
</dbReference>
<dbReference type="IntAct" id="Q9UPW8">
    <property type="interactions" value="5"/>
</dbReference>
<dbReference type="STRING" id="9606.ENSP00000429562"/>
<dbReference type="GlyGen" id="Q9UPW8">
    <property type="glycosylation" value="2 sites, 1 O-linked glycan (1 site)"/>
</dbReference>
<dbReference type="iPTMnet" id="Q9UPW8"/>
<dbReference type="PhosphoSitePlus" id="Q9UPW8"/>
<dbReference type="BioMuta" id="UNC13A"/>
<dbReference type="DMDM" id="374095515"/>
<dbReference type="jPOST" id="Q9UPW8"/>
<dbReference type="MassIVE" id="Q9UPW8"/>
<dbReference type="PaxDb" id="9606-ENSP00000429562"/>
<dbReference type="PeptideAtlas" id="Q9UPW8"/>
<dbReference type="ProteomicsDB" id="85464"/>
<dbReference type="Antibodypedia" id="43803">
    <property type="antibodies" value="35 antibodies from 19 providers"/>
</dbReference>
<dbReference type="DNASU" id="23025"/>
<dbReference type="Ensembl" id="ENST00000519716.7">
    <property type="protein sequence ID" value="ENSP00000429562.2"/>
    <property type="gene ID" value="ENSG00000130477.16"/>
</dbReference>
<dbReference type="GeneID" id="23025"/>
<dbReference type="KEGG" id="hsa:23025"/>
<dbReference type="MANE-Select" id="ENST00000519716.7">
    <property type="protein sequence ID" value="ENSP00000429562.2"/>
    <property type="RefSeq nucleotide sequence ID" value="NM_001080421.3"/>
    <property type="RefSeq protein sequence ID" value="NP_001073890.2"/>
</dbReference>
<dbReference type="UCSC" id="uc060vkq.1">
    <property type="organism name" value="human"/>
</dbReference>
<dbReference type="AGR" id="HGNC:23150"/>
<dbReference type="CTD" id="23025"/>
<dbReference type="DisGeNET" id="23025"/>
<dbReference type="GeneCards" id="UNC13A"/>
<dbReference type="HGNC" id="HGNC:23150">
    <property type="gene designation" value="UNC13A"/>
</dbReference>
<dbReference type="HPA" id="ENSG00000130477">
    <property type="expression patterns" value="Group enriched (brain, pituitary gland, retina)"/>
</dbReference>
<dbReference type="MalaCards" id="UNC13A"/>
<dbReference type="MIM" id="609894">
    <property type="type" value="gene"/>
</dbReference>
<dbReference type="neXtProt" id="NX_Q9UPW8"/>
<dbReference type="OpenTargets" id="ENSG00000130477"/>
<dbReference type="Orphanet" id="803">
    <property type="disease" value="Amyotrophic lateral sclerosis"/>
</dbReference>
<dbReference type="PharmGKB" id="PA134879020"/>
<dbReference type="VEuPathDB" id="HostDB:ENSG00000130477"/>
<dbReference type="eggNOG" id="KOG1011">
    <property type="taxonomic scope" value="Eukaryota"/>
</dbReference>
<dbReference type="GeneTree" id="ENSGT00940000161905"/>
<dbReference type="InParanoid" id="Q9UPW8"/>
<dbReference type="OrthoDB" id="10053234at2759"/>
<dbReference type="PAN-GO" id="Q9UPW8">
    <property type="GO annotations" value="15 GO annotations based on evolutionary models"/>
</dbReference>
<dbReference type="TreeFam" id="TF312844"/>
<dbReference type="PathwayCommons" id="Q9UPW8"/>
<dbReference type="SignaLink" id="Q9UPW8"/>
<dbReference type="SIGNOR" id="Q9UPW8"/>
<dbReference type="BioGRID-ORCS" id="23025">
    <property type="hits" value="13 hits in 1145 CRISPR screens"/>
</dbReference>
<dbReference type="CD-CODE" id="FB4E32DD">
    <property type="entry name" value="Presynaptic clusters and postsynaptic densities"/>
</dbReference>
<dbReference type="ChiTaRS" id="UNC13A">
    <property type="organism name" value="human"/>
</dbReference>
<dbReference type="GenomeRNAi" id="23025"/>
<dbReference type="Pharos" id="Q9UPW8">
    <property type="development level" value="Tbio"/>
</dbReference>
<dbReference type="PRO" id="PR:Q9UPW8"/>
<dbReference type="Proteomes" id="UP000005640">
    <property type="component" value="Chromosome 19"/>
</dbReference>
<dbReference type="RNAct" id="Q9UPW8">
    <property type="molecule type" value="protein"/>
</dbReference>
<dbReference type="Bgee" id="ENSG00000130477">
    <property type="expression patterns" value="Expressed in right hemisphere of cerebellum and 153 other cell types or tissues"/>
</dbReference>
<dbReference type="ExpressionAtlas" id="Q9UPW8">
    <property type="expression patterns" value="baseline and differential"/>
</dbReference>
<dbReference type="GO" id="GO:0031594">
    <property type="term" value="C:neuromuscular junction"/>
    <property type="evidence" value="ECO:0000318"/>
    <property type="project" value="GO_Central"/>
</dbReference>
<dbReference type="GO" id="GO:0043005">
    <property type="term" value="C:neuron projection"/>
    <property type="evidence" value="ECO:0000250"/>
    <property type="project" value="ParkinsonsUK-UCL"/>
</dbReference>
<dbReference type="GO" id="GO:0005886">
    <property type="term" value="C:plasma membrane"/>
    <property type="evidence" value="ECO:0000318"/>
    <property type="project" value="GO_Central"/>
</dbReference>
<dbReference type="GO" id="GO:0048786">
    <property type="term" value="C:presynaptic active zone"/>
    <property type="evidence" value="ECO:0000304"/>
    <property type="project" value="ParkinsonsUK-UCL"/>
</dbReference>
<dbReference type="GO" id="GO:0042734">
    <property type="term" value="C:presynaptic membrane"/>
    <property type="evidence" value="ECO:0000250"/>
    <property type="project" value="ParkinsonsUK-UCL"/>
</dbReference>
<dbReference type="GO" id="GO:0030672">
    <property type="term" value="C:synaptic vesicle membrane"/>
    <property type="evidence" value="ECO:0000318"/>
    <property type="project" value="GO_Central"/>
</dbReference>
<dbReference type="GO" id="GO:0043195">
    <property type="term" value="C:terminal bouton"/>
    <property type="evidence" value="ECO:0000318"/>
    <property type="project" value="GO_Central"/>
</dbReference>
<dbReference type="GO" id="GO:0005509">
    <property type="term" value="F:calcium ion binding"/>
    <property type="evidence" value="ECO:0007669"/>
    <property type="project" value="InterPro"/>
</dbReference>
<dbReference type="GO" id="GO:0005516">
    <property type="term" value="F:calmodulin binding"/>
    <property type="evidence" value="ECO:0000250"/>
    <property type="project" value="ParkinsonsUK-UCL"/>
</dbReference>
<dbReference type="GO" id="GO:0019992">
    <property type="term" value="F:diacylglycerol binding"/>
    <property type="evidence" value="ECO:0007669"/>
    <property type="project" value="InterPro"/>
</dbReference>
<dbReference type="GO" id="GO:0005543">
    <property type="term" value="F:phospholipid binding"/>
    <property type="evidence" value="ECO:0007669"/>
    <property type="project" value="InterPro"/>
</dbReference>
<dbReference type="GO" id="GO:0017075">
    <property type="term" value="F:syntaxin-1 binding"/>
    <property type="evidence" value="ECO:0000250"/>
    <property type="project" value="ParkinsonsUK-UCL"/>
</dbReference>
<dbReference type="GO" id="GO:0008270">
    <property type="term" value="F:zinc ion binding"/>
    <property type="evidence" value="ECO:0007669"/>
    <property type="project" value="UniProtKB-KW"/>
</dbReference>
<dbReference type="GO" id="GO:0030154">
    <property type="term" value="P:cell differentiation"/>
    <property type="evidence" value="ECO:0007669"/>
    <property type="project" value="UniProtKB-KW"/>
</dbReference>
<dbReference type="GO" id="GO:0061789">
    <property type="term" value="P:dense core granule priming"/>
    <property type="evidence" value="ECO:0000318"/>
    <property type="project" value="GO_Central"/>
</dbReference>
<dbReference type="GO" id="GO:0099011">
    <property type="term" value="P:neuronal dense core vesicle exocytosis"/>
    <property type="evidence" value="ECO:0000250"/>
    <property type="project" value="UniProtKB"/>
</dbReference>
<dbReference type="GO" id="GO:0007269">
    <property type="term" value="P:neurotransmitter secretion"/>
    <property type="evidence" value="ECO:0000250"/>
    <property type="project" value="ParkinsonsUK-UCL"/>
</dbReference>
<dbReference type="GO" id="GO:1903861">
    <property type="term" value="P:positive regulation of dendrite extension"/>
    <property type="evidence" value="ECO:0000314"/>
    <property type="project" value="UniProtKB"/>
</dbReference>
<dbReference type="GO" id="GO:0051966">
    <property type="term" value="P:regulation of synaptic transmission, glutamatergic"/>
    <property type="evidence" value="ECO:0000304"/>
    <property type="project" value="ParkinsonsUK-UCL"/>
</dbReference>
<dbReference type="GO" id="GO:0035249">
    <property type="term" value="P:synaptic transmission, glutamatergic"/>
    <property type="evidence" value="ECO:0000318"/>
    <property type="project" value="GO_Central"/>
</dbReference>
<dbReference type="GO" id="GO:0016081">
    <property type="term" value="P:synaptic vesicle docking"/>
    <property type="evidence" value="ECO:0000318"/>
    <property type="project" value="GO_Central"/>
</dbReference>
<dbReference type="GO" id="GO:0016082">
    <property type="term" value="P:synaptic vesicle priming"/>
    <property type="evidence" value="ECO:0000318"/>
    <property type="project" value="GO_Central"/>
</dbReference>
<dbReference type="CDD" id="cd20859">
    <property type="entry name" value="C1_Munc13-2-like"/>
    <property type="match status" value="1"/>
</dbReference>
<dbReference type="CDD" id="cd08394">
    <property type="entry name" value="C2A_Munc13"/>
    <property type="match status" value="1"/>
</dbReference>
<dbReference type="CDD" id="cd04027">
    <property type="entry name" value="C2B_Munc13"/>
    <property type="match status" value="1"/>
</dbReference>
<dbReference type="CDD" id="cd08395">
    <property type="entry name" value="C2C_Munc13"/>
    <property type="match status" value="1"/>
</dbReference>
<dbReference type="FunFam" id="1.10.357.50:FF:000001">
    <property type="entry name" value="Protein unc-13 homolog B"/>
    <property type="match status" value="1"/>
</dbReference>
<dbReference type="FunFam" id="1.20.58.1100:FF:000001">
    <property type="entry name" value="Protein unc-13 homolog B"/>
    <property type="match status" value="1"/>
</dbReference>
<dbReference type="FunFam" id="2.60.40.150:FF:000002">
    <property type="entry name" value="Protein unc-13 homolog B"/>
    <property type="match status" value="1"/>
</dbReference>
<dbReference type="FunFam" id="2.60.40.150:FF:000031">
    <property type="entry name" value="Protein unc-13 homolog B"/>
    <property type="match status" value="1"/>
</dbReference>
<dbReference type="FunFam" id="3.30.60.20:FF:000001">
    <property type="entry name" value="Protein unc-13 homolog B"/>
    <property type="match status" value="1"/>
</dbReference>
<dbReference type="FunFam" id="2.60.40.150:FF:000014">
    <property type="entry name" value="protein unc-13 homolog B"/>
    <property type="match status" value="1"/>
</dbReference>
<dbReference type="Gene3D" id="1.10.357.50">
    <property type="match status" value="1"/>
</dbReference>
<dbReference type="Gene3D" id="1.20.58.1100">
    <property type="match status" value="1"/>
</dbReference>
<dbReference type="Gene3D" id="3.30.60.20">
    <property type="match status" value="1"/>
</dbReference>
<dbReference type="Gene3D" id="2.60.40.150">
    <property type="entry name" value="C2 domain"/>
    <property type="match status" value="3"/>
</dbReference>
<dbReference type="InterPro" id="IPR046349">
    <property type="entry name" value="C1-like_sf"/>
</dbReference>
<dbReference type="InterPro" id="IPR000008">
    <property type="entry name" value="C2_dom"/>
</dbReference>
<dbReference type="InterPro" id="IPR035892">
    <property type="entry name" value="C2_domain_sf"/>
</dbReference>
<dbReference type="InterPro" id="IPR010439">
    <property type="entry name" value="MUN_dom"/>
</dbReference>
<dbReference type="InterPro" id="IPR014770">
    <property type="entry name" value="Munc13_1"/>
</dbReference>
<dbReference type="InterPro" id="IPR014772">
    <property type="entry name" value="Munc13_dom-2"/>
</dbReference>
<dbReference type="InterPro" id="IPR002219">
    <property type="entry name" value="PE/DAG-bd"/>
</dbReference>
<dbReference type="InterPro" id="IPR027080">
    <property type="entry name" value="Unc-13"/>
</dbReference>
<dbReference type="InterPro" id="IPR037302">
    <property type="entry name" value="Unc-13_C2B"/>
</dbReference>
<dbReference type="PANTHER" id="PTHR10480">
    <property type="entry name" value="PROTEIN UNC-13 HOMOLOG"/>
    <property type="match status" value="1"/>
</dbReference>
<dbReference type="PANTHER" id="PTHR10480:SF1">
    <property type="entry name" value="PROTEIN UNC-13 HOMOLOG A"/>
    <property type="match status" value="1"/>
</dbReference>
<dbReference type="Pfam" id="PF00130">
    <property type="entry name" value="C1_1"/>
    <property type="match status" value="1"/>
</dbReference>
<dbReference type="Pfam" id="PF00168">
    <property type="entry name" value="C2"/>
    <property type="match status" value="3"/>
</dbReference>
<dbReference type="Pfam" id="PF06292">
    <property type="entry name" value="MUN"/>
    <property type="match status" value="1"/>
</dbReference>
<dbReference type="PRINTS" id="PR00360">
    <property type="entry name" value="C2DOMAIN"/>
</dbReference>
<dbReference type="SMART" id="SM00109">
    <property type="entry name" value="C1"/>
    <property type="match status" value="1"/>
</dbReference>
<dbReference type="SMART" id="SM00239">
    <property type="entry name" value="C2"/>
    <property type="match status" value="3"/>
</dbReference>
<dbReference type="SMART" id="SM01145">
    <property type="entry name" value="DUF1041"/>
    <property type="match status" value="1"/>
</dbReference>
<dbReference type="SUPFAM" id="SSF49562">
    <property type="entry name" value="C2 domain (Calcium/lipid-binding domain, CaLB)"/>
    <property type="match status" value="3"/>
</dbReference>
<dbReference type="SUPFAM" id="SSF57889">
    <property type="entry name" value="Cysteine-rich domain"/>
    <property type="match status" value="1"/>
</dbReference>
<dbReference type="PROSITE" id="PS50004">
    <property type="entry name" value="C2"/>
    <property type="match status" value="3"/>
</dbReference>
<dbReference type="PROSITE" id="PS51258">
    <property type="entry name" value="MHD1"/>
    <property type="match status" value="1"/>
</dbReference>
<dbReference type="PROSITE" id="PS51259">
    <property type="entry name" value="MHD2"/>
    <property type="match status" value="1"/>
</dbReference>
<dbReference type="PROSITE" id="PS00479">
    <property type="entry name" value="ZF_DAG_PE_1"/>
    <property type="match status" value="1"/>
</dbReference>
<dbReference type="PROSITE" id="PS50081">
    <property type="entry name" value="ZF_DAG_PE_2"/>
    <property type="match status" value="1"/>
</dbReference>
<reference key="1">
    <citation type="journal article" date="2004" name="Nature">
        <title>The DNA sequence and biology of human chromosome 19.</title>
        <authorList>
            <person name="Grimwood J."/>
            <person name="Gordon L.A."/>
            <person name="Olsen A.S."/>
            <person name="Terry A."/>
            <person name="Schmutz J."/>
            <person name="Lamerdin J.E."/>
            <person name="Hellsten U."/>
            <person name="Goodstein D."/>
            <person name="Couronne O."/>
            <person name="Tran-Gyamfi M."/>
            <person name="Aerts A."/>
            <person name="Altherr M."/>
            <person name="Ashworth L."/>
            <person name="Bajorek E."/>
            <person name="Black S."/>
            <person name="Branscomb E."/>
            <person name="Caenepeel S."/>
            <person name="Carrano A.V."/>
            <person name="Caoile C."/>
            <person name="Chan Y.M."/>
            <person name="Christensen M."/>
            <person name="Cleland C.A."/>
            <person name="Copeland A."/>
            <person name="Dalin E."/>
            <person name="Dehal P."/>
            <person name="Denys M."/>
            <person name="Detter J.C."/>
            <person name="Escobar J."/>
            <person name="Flowers D."/>
            <person name="Fotopulos D."/>
            <person name="Garcia C."/>
            <person name="Georgescu A.M."/>
            <person name="Glavina T."/>
            <person name="Gomez M."/>
            <person name="Gonzales E."/>
            <person name="Groza M."/>
            <person name="Hammon N."/>
            <person name="Hawkins T."/>
            <person name="Haydu L."/>
            <person name="Ho I."/>
            <person name="Huang W."/>
            <person name="Israni S."/>
            <person name="Jett J."/>
            <person name="Kadner K."/>
            <person name="Kimball H."/>
            <person name="Kobayashi A."/>
            <person name="Larionov V."/>
            <person name="Leem S.-H."/>
            <person name="Lopez F."/>
            <person name="Lou Y."/>
            <person name="Lowry S."/>
            <person name="Malfatti S."/>
            <person name="Martinez D."/>
            <person name="McCready P.M."/>
            <person name="Medina C."/>
            <person name="Morgan J."/>
            <person name="Nelson K."/>
            <person name="Nolan M."/>
            <person name="Ovcharenko I."/>
            <person name="Pitluck S."/>
            <person name="Pollard M."/>
            <person name="Popkie A.P."/>
            <person name="Predki P."/>
            <person name="Quan G."/>
            <person name="Ramirez L."/>
            <person name="Rash S."/>
            <person name="Retterer J."/>
            <person name="Rodriguez A."/>
            <person name="Rogers S."/>
            <person name="Salamov A."/>
            <person name="Salazar A."/>
            <person name="She X."/>
            <person name="Smith D."/>
            <person name="Slezak T."/>
            <person name="Solovyev V."/>
            <person name="Thayer N."/>
            <person name="Tice H."/>
            <person name="Tsai M."/>
            <person name="Ustaszewska A."/>
            <person name="Vo N."/>
            <person name="Wagner M."/>
            <person name="Wheeler J."/>
            <person name="Wu K."/>
            <person name="Xie G."/>
            <person name="Yang J."/>
            <person name="Dubchak I."/>
            <person name="Furey T.S."/>
            <person name="DeJong P."/>
            <person name="Dickson M."/>
            <person name="Gordon D."/>
            <person name="Eichler E.E."/>
            <person name="Pennacchio L.A."/>
            <person name="Richardson P."/>
            <person name="Stubbs L."/>
            <person name="Rokhsar D.S."/>
            <person name="Myers R.M."/>
            <person name="Rubin E.M."/>
            <person name="Lucas S.M."/>
        </authorList>
    </citation>
    <scope>NUCLEOTIDE SEQUENCE [LARGE SCALE GENOMIC DNA]</scope>
</reference>
<reference key="2">
    <citation type="journal article" date="1999" name="DNA Res.">
        <title>Prediction of the coding sequences of unidentified human genes. XIV. The complete sequences of 100 new cDNA clones from brain which code for large proteins in vitro.</title>
        <authorList>
            <person name="Kikuno R."/>
            <person name="Nagase T."/>
            <person name="Ishikawa K."/>
            <person name="Hirosawa M."/>
            <person name="Miyajima N."/>
            <person name="Tanaka A."/>
            <person name="Kotani H."/>
            <person name="Nomura N."/>
            <person name="Ohara O."/>
        </authorList>
    </citation>
    <scope>NUCLEOTIDE SEQUENCE [LARGE SCALE MRNA] OF 2-1703</scope>
    <source>
        <tissue>Brain</tissue>
    </source>
</reference>
<reference key="3">
    <citation type="submission" date="2005-01" db="EMBL/GenBank/DDBJ databases">
        <authorList>
            <person name="Ohara O."/>
            <person name="Nagase T."/>
            <person name="Kikuno R."/>
        </authorList>
    </citation>
    <scope>SEQUENCE REVISION</scope>
</reference>
<reference key="4">
    <citation type="journal article" date="2003" name="J. Biol. Chem.">
        <title>Regulation of insulin exocytosis by Munc13-1.</title>
        <authorList>
            <person name="Sheu L."/>
            <person name="Pasyk E.A."/>
            <person name="Ji J."/>
            <person name="Huang X."/>
            <person name="Gao X."/>
            <person name="Varoqueaux F."/>
            <person name="Brose N."/>
            <person name="Gaisano H.Y."/>
        </authorList>
    </citation>
    <scope>TISSUE SPECIFICITY</scope>
</reference>
<reference key="5">
    <citation type="journal article" date="2013" name="J. Dermatol. Sci.">
        <title>SYT14L, especially its C2 domain, is involved in regulating melanocyte differentiation.</title>
        <authorList>
            <person name="Yoo J.C."/>
            <person name="Lim T.Y."/>
            <person name="Park J.S."/>
            <person name="Hah Y.S."/>
            <person name="Park N."/>
            <person name="Hong S.G."/>
            <person name="Park J.Y."/>
            <person name="Yoon T.J."/>
        </authorList>
    </citation>
    <scope>FUNCTION</scope>
    <scope>TISSUE SPECIFICITY</scope>
</reference>
<accession>Q9UPW8</accession>
<accession>E5RHY9</accession>
<feature type="chain" id="PRO_0000188573" description="Protein unc-13 homolog A">
    <location>
        <begin position="1"/>
        <end position="1703"/>
    </location>
</feature>
<feature type="domain" description="C2 1" evidence="5">
    <location>
        <begin position="1"/>
        <end position="97"/>
    </location>
</feature>
<feature type="domain" description="C2 2" evidence="5">
    <location>
        <begin position="659"/>
        <end position="783"/>
    </location>
</feature>
<feature type="domain" description="MHD1" evidence="7">
    <location>
        <begin position="1093"/>
        <end position="1236"/>
    </location>
</feature>
<feature type="domain" description="MHD2" evidence="8">
    <location>
        <begin position="1345"/>
        <end position="1512"/>
    </location>
</feature>
<feature type="domain" description="C2 3" evidence="5">
    <location>
        <begin position="1526"/>
        <end position="1653"/>
    </location>
</feature>
<feature type="zinc finger region" description="Phorbol-ester/DAG-type" evidence="6">
    <location>
        <begin position="553"/>
        <end position="603"/>
    </location>
</feature>
<feature type="region of interest" description="Disordered" evidence="9">
    <location>
        <begin position="186"/>
        <end position="445"/>
    </location>
</feature>
<feature type="coiled-coil region" evidence="4">
    <location>
        <begin position="320"/>
        <end position="357"/>
    </location>
</feature>
<feature type="compositionally biased region" description="Basic and acidic residues" evidence="9">
    <location>
        <begin position="186"/>
        <end position="203"/>
    </location>
</feature>
<feature type="compositionally biased region" description="Polar residues" evidence="9">
    <location>
        <begin position="204"/>
        <end position="225"/>
    </location>
</feature>
<feature type="compositionally biased region" description="Polar residues" evidence="9">
    <location>
        <begin position="253"/>
        <end position="264"/>
    </location>
</feature>
<feature type="compositionally biased region" description="Low complexity" evidence="9">
    <location>
        <begin position="265"/>
        <end position="277"/>
    </location>
</feature>
<feature type="compositionally biased region" description="Acidic residues" evidence="9">
    <location>
        <begin position="319"/>
        <end position="353"/>
    </location>
</feature>
<feature type="compositionally biased region" description="Basic and acidic residues" evidence="9">
    <location>
        <begin position="360"/>
        <end position="374"/>
    </location>
</feature>
<feature type="compositionally biased region" description="Basic and acidic residues" evidence="9">
    <location>
        <begin position="421"/>
        <end position="433"/>
    </location>
</feature>
<feature type="binding site" evidence="1">
    <location>
        <position position="567"/>
    </location>
    <ligand>
        <name>Zn(2+)</name>
        <dbReference type="ChEBI" id="CHEBI:29105"/>
        <label>1</label>
    </ligand>
</feature>
<feature type="binding site" evidence="1">
    <location>
        <position position="570"/>
    </location>
    <ligand>
        <name>Zn(2+)</name>
        <dbReference type="ChEBI" id="CHEBI:29105"/>
        <label>1</label>
    </ligand>
</feature>
<feature type="binding site" evidence="1">
    <location>
        <position position="584"/>
    </location>
    <ligand>
        <name>Zn(2+)</name>
        <dbReference type="ChEBI" id="CHEBI:29105"/>
        <label>2</label>
    </ligand>
</feature>
<feature type="binding site" evidence="1">
    <location>
        <position position="587"/>
    </location>
    <ligand>
        <name>Zn(2+)</name>
        <dbReference type="ChEBI" id="CHEBI:29105"/>
        <label>2</label>
    </ligand>
</feature>
<feature type="binding site" evidence="1">
    <location>
        <position position="595"/>
    </location>
    <ligand>
        <name>Zn(2+)</name>
        <dbReference type="ChEBI" id="CHEBI:29105"/>
        <label>1</label>
    </ligand>
</feature>
<feature type="binding site" evidence="1">
    <location>
        <position position="603"/>
    </location>
    <ligand>
        <name>Zn(2+)</name>
        <dbReference type="ChEBI" id="CHEBI:29105"/>
        <label>2</label>
    </ligand>
</feature>
<feature type="binding site" evidence="5">
    <location>
        <position position="692"/>
    </location>
    <ligand>
        <name>Ca(2+)</name>
        <dbReference type="ChEBI" id="CHEBI:29108"/>
        <label>1</label>
    </ligand>
</feature>
<feature type="binding site" evidence="5">
    <location>
        <position position="692"/>
    </location>
    <ligand>
        <name>Ca(2+)</name>
        <dbReference type="ChEBI" id="CHEBI:29108"/>
        <label>2</label>
    </ligand>
</feature>
<feature type="binding site" evidence="5">
    <location>
        <position position="698"/>
    </location>
    <ligand>
        <name>Ca(2+)</name>
        <dbReference type="ChEBI" id="CHEBI:29108"/>
        <label>1</label>
    </ligand>
</feature>
<feature type="binding site" evidence="5">
    <location>
        <position position="744"/>
    </location>
    <ligand>
        <name>Ca(2+)</name>
        <dbReference type="ChEBI" id="CHEBI:29108"/>
        <label>1</label>
    </ligand>
</feature>
<feature type="binding site" evidence="5">
    <location>
        <position position="744"/>
    </location>
    <ligand>
        <name>Ca(2+)</name>
        <dbReference type="ChEBI" id="CHEBI:29108"/>
        <label>2</label>
    </ligand>
</feature>
<feature type="binding site" evidence="5">
    <location>
        <position position="746"/>
    </location>
    <ligand>
        <name>Ca(2+)</name>
        <dbReference type="ChEBI" id="CHEBI:29108"/>
        <label>1</label>
    </ligand>
</feature>
<feature type="binding site" evidence="5">
    <location>
        <position position="746"/>
    </location>
    <ligand>
        <name>Ca(2+)</name>
        <dbReference type="ChEBI" id="CHEBI:29108"/>
        <label>2</label>
    </ligand>
</feature>
<feature type="binding site" evidence="5">
    <location>
        <position position="763"/>
    </location>
    <ligand>
        <name>Ca(2+)</name>
        <dbReference type="ChEBI" id="CHEBI:29108"/>
        <label>2</label>
    </ligand>
</feature>
<feature type="modified residue" description="Phosphoserine" evidence="3">
    <location>
        <position position="240"/>
    </location>
</feature>
<feature type="modified residue" description="Phosphoserine" evidence="3">
    <location>
        <position position="242"/>
    </location>
</feature>
<feature type="modified residue" description="Phosphoserine" evidence="3">
    <location>
        <position position="245"/>
    </location>
</feature>
<feature type="modified residue" description="Phosphoserine" evidence="3">
    <location>
        <position position="256"/>
    </location>
</feature>
<feature type="sequence variant" id="VAR_061872" description="In dbSNP:rs34752754.">
    <original>A</original>
    <variation>T</variation>
    <location>
        <position position="359"/>
    </location>
</feature>
<feature type="sequence conflict" description="In Ref. 2; BAA82984." evidence="12" ref="2">
    <original>L</original>
    <variation>P</variation>
    <location>
        <position position="1034"/>
    </location>
</feature>
<name>UN13A_HUMAN</name>
<sequence>MSLLCVGVKKAKFDGAQEKFNTYVTLKVQNVKSTTIAVRGSQPSWEQDFMFEINRLDLGLTVEVWNKGLIWDTMVGTVWIPLRTIRQSNEEGPGEWLTLDSQVIMADSEICGTKDPTFHRILLDTRFELPLDIPEEEARYWAKKLEQLNAMRDQDEYSFQDEQDKPLPVPSNQCCNWNYFGWGEQHNDDPDSAVDDRDSDYRSETSNSIPPPYYTTSQPNASVHQYSVRPPPLGSRESYSDSMHSYEEFSEPQALSPTGSSRYASSGELSQGSSQLSEDFDPDEHSLQGSDMEDERDRDSYHSCHSSVSYHKDSPRWDQDEEELEEDLEDFLEEEELPEDEEELEEEEEEVPDDLGSYAQREDVAVAEPKDFKRISLPPAAPGKEDKAPVAPTEAPDMAKVAPKPATPDKVPAAEQIPEAEPPKDEESFRPREDEEGQEGQDSMSRAKANWLRAFNKVRMQLQEARGEGEMSKSLWFKGGPGGGLIIIDSMPDIRKRKPIPLVSDLAMSLVQSRKAGITSALASSTLNNEELKNHVYKKTLQALIYPISCTTPHNFEVWTATTPTYCYECEGLLWGIARQGMRCTECGVKCHEKCQDLLNADCLQRAAEKSSKHGAEDRTQNIIMVLKDRMKIRERNKPEIFELIQEIFAVTKTAHTQQMKAVKQSVLDGTSKWSAKISITVVCAQGLQAKDKTGSSDPYVTVQVGKTKKRTKTIYGNLNPVWEENFHFECHNSSDRIKVRVWDEDDDIKSRVKQRFKRESDDFLGQTIIEVRTLSGEMDVWYNLDKRTDKSAVSGAIRLHISVEIKGEEKVAPYHVQYTCLHENLFHFVTDVQNNGVVKIPDAKGDDAWKVYYDETAQEIVDEFAMRYGVESIYQAMTHFACLSSKYMCPGVPAVMSTLLANINAYYAHTTASTNVSASDRFAASNFGKERFVKLLDQLHNSLRIDLSMYRNNFPASSPERLQDLKSTVDLLTSITFFRMKVQELQSPPRASQVVKDCVKACLNSTYEYIFNNCHELYSREYQTDPAKKGEVLPEEQGPSIKNLDFWSKLITLIVSIIEEDKNSYTPCLNQFPQELNVGKISAEVMWNLFAQDMKYAMEEHDKHRLCKSADYMNLHFKVKWLYNEYVTELPAFKDRVPEYPAWFEPFVIQWLDENEEVSRDFLHGALERDKKDGFQQTSEHALFSCSVVDVFSQLNQSFEIIKKLECPDPQIVGHYMRRFAKTISNVLLQYADIISKDFASYCSKEKEKVPCILMNNTQQLRVQLEKMFEAMGGKELDAEASDILKELQVKLNNVLDELSRVFATSFQPHIEECVKQMGDILSQVKGTGNVPASACSSVAQDADNVLQPIMDLLDSNLTLFAKICEKTVLKRVLKELWKLVMNTMEKTIVLPPLTDQTMIGNLLRKHGKGLEKGRVKLPSHSDGTQMIFNAAKELGQLSKLKDHMVREEAKSLTPKQCAVVELALDTIKQYFHAGGVGLKKTFLEKSPDLQSLRYALSLYTQATDLLIKTFVQTQSAQGLGVEDPVGEVSVHVELFTHPGTGEHKVTVKVVAANDLKWQTSGIFRPFIEVNIIGPQLSDKKRKFATKSKNNSWAPKYNESFQFTLSADAGPECYELQVCVKDYCFAREDRTVGLAVLQLRELAQRGSAACWLPLGRRIHMDDTGLTVLRILSQRSNDEVAKEFVKLKSDTRSAEEGGAAPAP</sequence>
<organism>
    <name type="scientific">Homo sapiens</name>
    <name type="common">Human</name>
    <dbReference type="NCBI Taxonomy" id="9606"/>
    <lineage>
        <taxon>Eukaryota</taxon>
        <taxon>Metazoa</taxon>
        <taxon>Chordata</taxon>
        <taxon>Craniata</taxon>
        <taxon>Vertebrata</taxon>
        <taxon>Euteleostomi</taxon>
        <taxon>Mammalia</taxon>
        <taxon>Eutheria</taxon>
        <taxon>Euarchontoglires</taxon>
        <taxon>Primates</taxon>
        <taxon>Haplorrhini</taxon>
        <taxon>Catarrhini</taxon>
        <taxon>Hominidae</taxon>
        <taxon>Homo</taxon>
    </lineage>
</organism>